<protein>
    <recommendedName>
        <fullName evidence="1">Sulfate adenylyltransferase subunit 2</fullName>
        <ecNumber evidence="1">2.7.7.4</ecNumber>
    </recommendedName>
    <alternativeName>
        <fullName evidence="1">ATP-sulfurylase small subunit</fullName>
    </alternativeName>
    <alternativeName>
        <fullName evidence="1">Sulfate adenylate transferase</fullName>
        <shortName evidence="1">SAT</shortName>
    </alternativeName>
</protein>
<dbReference type="EC" id="2.7.7.4" evidence="1"/>
<dbReference type="EMBL" id="CP000753">
    <property type="protein sequence ID" value="ABS07082.1"/>
    <property type="molecule type" value="Genomic_DNA"/>
</dbReference>
<dbReference type="RefSeq" id="WP_012088388.1">
    <property type="nucleotide sequence ID" value="NC_009665.1"/>
</dbReference>
<dbReference type="SMR" id="A6WJU3"/>
<dbReference type="KEGG" id="sbm:Shew185_0928"/>
<dbReference type="HOGENOM" id="CLU_043026_0_0_6"/>
<dbReference type="UniPathway" id="UPA00140">
    <property type="reaction ID" value="UER00204"/>
</dbReference>
<dbReference type="GO" id="GO:0005524">
    <property type="term" value="F:ATP binding"/>
    <property type="evidence" value="ECO:0007669"/>
    <property type="project" value="UniProtKB-KW"/>
</dbReference>
<dbReference type="GO" id="GO:0004781">
    <property type="term" value="F:sulfate adenylyltransferase (ATP) activity"/>
    <property type="evidence" value="ECO:0007669"/>
    <property type="project" value="UniProtKB-UniRule"/>
</dbReference>
<dbReference type="GO" id="GO:0070814">
    <property type="term" value="P:hydrogen sulfide biosynthetic process"/>
    <property type="evidence" value="ECO:0007669"/>
    <property type="project" value="UniProtKB-UniRule"/>
</dbReference>
<dbReference type="GO" id="GO:0000103">
    <property type="term" value="P:sulfate assimilation"/>
    <property type="evidence" value="ECO:0007669"/>
    <property type="project" value="UniProtKB-UniRule"/>
</dbReference>
<dbReference type="CDD" id="cd23946">
    <property type="entry name" value="Sulfate_adenylyltransferase_2"/>
    <property type="match status" value="1"/>
</dbReference>
<dbReference type="FunFam" id="3.40.50.620:FF:000002">
    <property type="entry name" value="Sulfate adenylyltransferase subunit 2"/>
    <property type="match status" value="1"/>
</dbReference>
<dbReference type="Gene3D" id="3.40.50.620">
    <property type="entry name" value="HUPs"/>
    <property type="match status" value="1"/>
</dbReference>
<dbReference type="HAMAP" id="MF_00064">
    <property type="entry name" value="Sulf_adenylyltr_sub2"/>
    <property type="match status" value="1"/>
</dbReference>
<dbReference type="InterPro" id="IPR002500">
    <property type="entry name" value="PAPS_reduct_dom"/>
</dbReference>
<dbReference type="InterPro" id="IPR014729">
    <property type="entry name" value="Rossmann-like_a/b/a_fold"/>
</dbReference>
<dbReference type="InterPro" id="IPR011784">
    <property type="entry name" value="SO4_adenylTrfase_ssu"/>
</dbReference>
<dbReference type="InterPro" id="IPR050128">
    <property type="entry name" value="Sulfate_adenylyltrnsfr_sub2"/>
</dbReference>
<dbReference type="NCBIfam" id="TIGR02039">
    <property type="entry name" value="CysD"/>
    <property type="match status" value="1"/>
</dbReference>
<dbReference type="NCBIfam" id="NF003587">
    <property type="entry name" value="PRK05253.1"/>
    <property type="match status" value="1"/>
</dbReference>
<dbReference type="NCBIfam" id="NF009214">
    <property type="entry name" value="PRK12563.1"/>
    <property type="match status" value="1"/>
</dbReference>
<dbReference type="PANTHER" id="PTHR43196">
    <property type="entry name" value="SULFATE ADENYLYLTRANSFERASE SUBUNIT 2"/>
    <property type="match status" value="1"/>
</dbReference>
<dbReference type="PANTHER" id="PTHR43196:SF1">
    <property type="entry name" value="SULFATE ADENYLYLTRANSFERASE SUBUNIT 2"/>
    <property type="match status" value="1"/>
</dbReference>
<dbReference type="Pfam" id="PF01507">
    <property type="entry name" value="PAPS_reduct"/>
    <property type="match status" value="1"/>
</dbReference>
<dbReference type="PIRSF" id="PIRSF002936">
    <property type="entry name" value="CysDAde_trans"/>
    <property type="match status" value="1"/>
</dbReference>
<dbReference type="SUPFAM" id="SSF52402">
    <property type="entry name" value="Adenine nucleotide alpha hydrolases-like"/>
    <property type="match status" value="1"/>
</dbReference>
<gene>
    <name evidence="1" type="primary">cysD</name>
    <name type="ordered locus">Shew185_0928</name>
</gene>
<comment type="function">
    <text evidence="1">With CysN forms the ATP sulfurylase (ATPS) that catalyzes the adenylation of sulfate producing adenosine 5'-phosphosulfate (APS) and diphosphate, the first enzymatic step in sulfur assimilation pathway. APS synthesis involves the formation of a high-energy phosphoric-sulfuric acid anhydride bond driven by GTP hydrolysis by CysN coupled to ATP hydrolysis by CysD.</text>
</comment>
<comment type="catalytic activity">
    <reaction evidence="1">
        <text>sulfate + ATP + H(+) = adenosine 5'-phosphosulfate + diphosphate</text>
        <dbReference type="Rhea" id="RHEA:18133"/>
        <dbReference type="ChEBI" id="CHEBI:15378"/>
        <dbReference type="ChEBI" id="CHEBI:16189"/>
        <dbReference type="ChEBI" id="CHEBI:30616"/>
        <dbReference type="ChEBI" id="CHEBI:33019"/>
        <dbReference type="ChEBI" id="CHEBI:58243"/>
        <dbReference type="EC" id="2.7.7.4"/>
    </reaction>
</comment>
<comment type="pathway">
    <text evidence="1">Sulfur metabolism; hydrogen sulfide biosynthesis; sulfite from sulfate: step 1/3.</text>
</comment>
<comment type="subunit">
    <text evidence="1">Heterodimer composed of CysD, the smaller subunit, and CysN.</text>
</comment>
<comment type="similarity">
    <text evidence="1">Belongs to the PAPS reductase family. CysD subfamily.</text>
</comment>
<accession>A6WJU3</accession>
<feature type="chain" id="PRO_1000008983" description="Sulfate adenylyltransferase subunit 2">
    <location>
        <begin position="1"/>
        <end position="302"/>
    </location>
</feature>
<feature type="region of interest" description="Disordered" evidence="2">
    <location>
        <begin position="280"/>
        <end position="302"/>
    </location>
</feature>
<sequence>MAGRELSHLQQLEAESIQIIREVAAEFDNPVMLYSIGKDSSVMLHLARKAFYPGKIPFPLLHVDTGWKFKEMIAFRDAQAKKFGFELLAHINPEGLAQGINPFDHGSAKHTDIMKTQGLKQALNQYGFDAAFGGARRDEEKSRAKERVYSFRDRHHRWDPKNQRPELWRTYNGAVNKGESIRVFPLSNWTELDIWQYIYQENIELVPLYFAAKRQVVERGGQLIMADDERMKLAEGEQFKEELVRFRTLGCYPLTAAMHSEADSLEKIIEEMLLTRSSERQGRLIDSDQSASMEQKKRQGYF</sequence>
<name>CYSD_SHEB8</name>
<evidence type="ECO:0000255" key="1">
    <source>
        <dbReference type="HAMAP-Rule" id="MF_00064"/>
    </source>
</evidence>
<evidence type="ECO:0000256" key="2">
    <source>
        <dbReference type="SAM" id="MobiDB-lite"/>
    </source>
</evidence>
<keyword id="KW-0067">ATP-binding</keyword>
<keyword id="KW-0547">Nucleotide-binding</keyword>
<keyword id="KW-0548">Nucleotidyltransferase</keyword>
<keyword id="KW-0808">Transferase</keyword>
<organism>
    <name type="scientific">Shewanella baltica (strain OS185)</name>
    <dbReference type="NCBI Taxonomy" id="402882"/>
    <lineage>
        <taxon>Bacteria</taxon>
        <taxon>Pseudomonadati</taxon>
        <taxon>Pseudomonadota</taxon>
        <taxon>Gammaproteobacteria</taxon>
        <taxon>Alteromonadales</taxon>
        <taxon>Shewanellaceae</taxon>
        <taxon>Shewanella</taxon>
    </lineage>
</organism>
<proteinExistence type="inferred from homology"/>
<reference key="1">
    <citation type="submission" date="2007-07" db="EMBL/GenBank/DDBJ databases">
        <title>Complete sequence of chromosome of Shewanella baltica OS185.</title>
        <authorList>
            <consortium name="US DOE Joint Genome Institute"/>
            <person name="Copeland A."/>
            <person name="Lucas S."/>
            <person name="Lapidus A."/>
            <person name="Barry K."/>
            <person name="Glavina del Rio T."/>
            <person name="Dalin E."/>
            <person name="Tice H."/>
            <person name="Pitluck S."/>
            <person name="Sims D."/>
            <person name="Brettin T."/>
            <person name="Bruce D."/>
            <person name="Detter J.C."/>
            <person name="Han C."/>
            <person name="Schmutz J."/>
            <person name="Larimer F."/>
            <person name="Land M."/>
            <person name="Hauser L."/>
            <person name="Kyrpides N."/>
            <person name="Mikhailova N."/>
            <person name="Brettar I."/>
            <person name="Rodrigues J."/>
            <person name="Konstantinidis K."/>
            <person name="Tiedje J."/>
            <person name="Richardson P."/>
        </authorList>
    </citation>
    <scope>NUCLEOTIDE SEQUENCE [LARGE SCALE GENOMIC DNA]</scope>
    <source>
        <strain>OS185</strain>
    </source>
</reference>